<dbReference type="EMBL" id="AF153452">
    <property type="protein sequence ID" value="AAD38788.1"/>
    <property type="molecule type" value="Genomic_DNA"/>
</dbReference>
<dbReference type="SMR" id="Q9YGA3"/>
<dbReference type="UniPathway" id="UPA00644"/>
<dbReference type="GO" id="GO:0031419">
    <property type="term" value="F:cobalamin binding"/>
    <property type="evidence" value="ECO:0007669"/>
    <property type="project" value="InterPro"/>
</dbReference>
<dbReference type="GO" id="GO:0046872">
    <property type="term" value="F:metal ion binding"/>
    <property type="evidence" value="ECO:0007669"/>
    <property type="project" value="InterPro"/>
</dbReference>
<dbReference type="GO" id="GO:0015948">
    <property type="term" value="P:methanogenesis"/>
    <property type="evidence" value="ECO:0007669"/>
    <property type="project" value="UniProtKB-KW"/>
</dbReference>
<dbReference type="Gene3D" id="3.40.50.280">
    <property type="entry name" value="Cobalamin-binding domain"/>
    <property type="match status" value="1"/>
</dbReference>
<dbReference type="InterPro" id="IPR006158">
    <property type="entry name" value="Cobalamin-bd"/>
</dbReference>
<dbReference type="InterPro" id="IPR036724">
    <property type="entry name" value="Cobalamin-bd_sf"/>
</dbReference>
<dbReference type="SUPFAM" id="SSF52242">
    <property type="entry name" value="Cobalamin (vitamin B12)-binding domain"/>
    <property type="match status" value="1"/>
</dbReference>
<dbReference type="PROSITE" id="PS51332">
    <property type="entry name" value="B12_BINDING"/>
    <property type="match status" value="1"/>
</dbReference>
<organism>
    <name type="scientific">Methanosarcina thermophila</name>
    <dbReference type="NCBI Taxonomy" id="2210"/>
    <lineage>
        <taxon>Archaea</taxon>
        <taxon>Methanobacteriati</taxon>
        <taxon>Methanobacteriota</taxon>
        <taxon>Stenosarchaea group</taxon>
        <taxon>Methanomicrobia</taxon>
        <taxon>Methanosarcinales</taxon>
        <taxon>Methanosarcinaceae</taxon>
        <taxon>Methanosarcina</taxon>
    </lineage>
</organism>
<comment type="function">
    <text evidence="1">Acts as a methyl group carrier between MtbB and MtbA.</text>
</comment>
<comment type="pathway">
    <text>One-carbon metabolism; methanogenesis from dimethylamine.</text>
</comment>
<comment type="similarity">
    <text evidence="3">Belongs to the methylamine corrinoid protein family.</text>
</comment>
<accession>Q9YGA3</accession>
<proteinExistence type="inferred from homology"/>
<gene>
    <name type="primary">mtbC</name>
</gene>
<keyword id="KW-0170">Cobalt</keyword>
<keyword id="KW-0484">Methanogenesis</keyword>
<name>MTBC_METTE</name>
<feature type="chain" id="PRO_0000216474" description="Dimethylamine corrinoid protein">
    <location>
        <begin position="1" status="less than"/>
        <end position="59"/>
    </location>
</feature>
<feature type="domain" description="B12-binding" evidence="2">
    <location>
        <begin position="1" status="less than"/>
        <end position="59"/>
    </location>
</feature>
<feature type="non-terminal residue">
    <location>
        <position position="1"/>
    </location>
</feature>
<sequence>TLQGQKDVIELLKEEGLRDKIKVMVGGAPATQAWADKIGADCYAENASEAVAKAKELLA</sequence>
<evidence type="ECO:0000250" key="1"/>
<evidence type="ECO:0000255" key="2">
    <source>
        <dbReference type="PROSITE-ProRule" id="PRU00666"/>
    </source>
</evidence>
<evidence type="ECO:0000305" key="3"/>
<protein>
    <recommendedName>
        <fullName>Dimethylamine corrinoid protein</fullName>
    </recommendedName>
</protein>
<reference key="1">
    <citation type="journal article" date="2000" name="J. Bacteriol.">
        <title>The trimethylamine methyltransferase gene and multiple dimethylamine methyltransferase genes of Methanosarcina barkeri contain in-frame and read-through amber codons.</title>
        <authorList>
            <person name="Paul L."/>
            <person name="Ferguson D.J. Jr."/>
            <person name="Krzycki J.A."/>
        </authorList>
    </citation>
    <scope>NUCLEOTIDE SEQUENCE [GENOMIC DNA]</scope>
    <source>
        <strain>ATCC 43570 / DSM 1825 / OCM 12 / TM-1</strain>
    </source>
</reference>